<sequence length="486" mass="53373">MNKPVSIGLLQQPKPFFMIFFVELWERFGYYGVQGVLTVYFVQKLGFSQEQAFITFGAFAALVFGLISIGGYVGDHLLGTKRTIVLGAIVLAIGYFMTGLSILHPNLIFYALGTIAVGNGLFKANPASLLSKCYPPKDPRLDGAFTLFYMSINLGSLFSLALAPVIAEKFSYAVTYNICGIGLIIALLVYIFCRNTVRNIGSEPDHQRINYTNLFLVVAGSVVMVYVCAWLMHNVKIANIMLITLSVIVVFIFFREALKQDKIGRNKMFVAFILMLQAIVFFILYAQMPTSLNFFAIHNVHHQLLGFNINPVSFQALNPFWIVVASPILAVLYTHWGAKGKDLTMPAKFAVGMFLCSLGFLTAAAAGLWFADEQGLTSAWFIVLVYLFQGVGELMISALGLAMIAALVPQYLMGFILGMWYLTQATSSLLGGYVAALTAAPKGITDPLQTLPVYTSVFGKIGIATFIVAIIMAATVPLLNRMMQEK</sequence>
<feature type="chain" id="PRO_0000395186" description="Dipeptide and tripeptide permease B">
    <location>
        <begin position="1"/>
        <end position="486"/>
    </location>
</feature>
<feature type="topological domain" description="Cytoplasmic" evidence="1">
    <location>
        <begin position="1"/>
        <end position="27"/>
    </location>
</feature>
<feature type="transmembrane region" description="Helical" evidence="1">
    <location>
        <begin position="28"/>
        <end position="48"/>
    </location>
</feature>
<feature type="topological domain" description="Periplasmic" evidence="1">
    <location>
        <begin position="49"/>
        <end position="52"/>
    </location>
</feature>
<feature type="transmembrane region" description="Helical" evidence="1">
    <location>
        <begin position="53"/>
        <end position="73"/>
    </location>
</feature>
<feature type="topological domain" description="Cytoplasmic" evidence="1">
    <location>
        <begin position="74"/>
        <end position="82"/>
    </location>
</feature>
<feature type="transmembrane region" description="Helical" evidence="1">
    <location>
        <begin position="83"/>
        <end position="103"/>
    </location>
</feature>
<feature type="topological domain" description="Periplasmic" evidence="1">
    <location>
        <begin position="104"/>
        <end position="106"/>
    </location>
</feature>
<feature type="transmembrane region" description="Helical" evidence="1">
    <location>
        <begin position="107"/>
        <end position="127"/>
    </location>
</feature>
<feature type="topological domain" description="Cytoplasmic" evidence="1">
    <location>
        <begin position="128"/>
        <end position="146"/>
    </location>
</feature>
<feature type="transmembrane region" description="Helical" evidence="1">
    <location>
        <begin position="147"/>
        <end position="167"/>
    </location>
</feature>
<feature type="topological domain" description="Periplasmic" evidence="1">
    <location>
        <begin position="168"/>
        <end position="172"/>
    </location>
</feature>
<feature type="transmembrane region" description="Helical" evidence="1">
    <location>
        <begin position="173"/>
        <end position="193"/>
    </location>
</feature>
<feature type="topological domain" description="Cytoplasmic" evidence="1">
    <location>
        <begin position="194"/>
        <end position="211"/>
    </location>
</feature>
<feature type="transmembrane region" description="Helical" evidence="1">
    <location>
        <begin position="212"/>
        <end position="232"/>
    </location>
</feature>
<feature type="topological domain" description="Periplasmic" evidence="1">
    <location>
        <position position="233"/>
    </location>
</feature>
<feature type="transmembrane region" description="Helical" evidence="1">
    <location>
        <begin position="234"/>
        <end position="254"/>
    </location>
</feature>
<feature type="topological domain" description="Cytoplasmic" evidence="1">
    <location>
        <begin position="255"/>
        <end position="267"/>
    </location>
</feature>
<feature type="transmembrane region" description="Helical" evidence="1">
    <location>
        <begin position="268"/>
        <end position="288"/>
    </location>
</feature>
<feature type="topological domain" description="Periplasmic" evidence="1">
    <location>
        <begin position="289"/>
        <end position="311"/>
    </location>
</feature>
<feature type="transmembrane region" description="Helical" evidence="1">
    <location>
        <begin position="312"/>
        <end position="332"/>
    </location>
</feature>
<feature type="topological domain" description="Cytoplasmic" evidence="1">
    <location>
        <begin position="333"/>
        <end position="348"/>
    </location>
</feature>
<feature type="transmembrane region" description="Helical" evidence="1">
    <location>
        <begin position="349"/>
        <end position="369"/>
    </location>
</feature>
<feature type="topological domain" description="Periplasmic" evidence="1">
    <location>
        <begin position="370"/>
        <end position="375"/>
    </location>
</feature>
<feature type="transmembrane region" description="Helical" evidence="1">
    <location>
        <begin position="376"/>
        <end position="396"/>
    </location>
</feature>
<feature type="topological domain" description="Cytoplasmic" evidence="1">
    <location>
        <begin position="397"/>
        <end position="419"/>
    </location>
</feature>
<feature type="transmembrane region" description="Helical" evidence="1">
    <location>
        <begin position="420"/>
        <end position="440"/>
    </location>
</feature>
<feature type="topological domain" description="Periplasmic" evidence="1">
    <location>
        <begin position="441"/>
        <end position="456"/>
    </location>
</feature>
<feature type="transmembrane region" description="Helical" evidence="1">
    <location>
        <begin position="457"/>
        <end position="477"/>
    </location>
</feature>
<feature type="topological domain" description="Cytoplasmic" evidence="1">
    <location>
        <begin position="478"/>
        <end position="486"/>
    </location>
</feature>
<evidence type="ECO:0000255" key="1">
    <source>
        <dbReference type="HAMAP-Rule" id="MF_01879"/>
    </source>
</evidence>
<reference key="1">
    <citation type="journal article" date="2002" name="Trends Microbiol.">
        <title>Genomic islands in Photorhabdus.</title>
        <authorList>
            <person name="Waterfield N.R."/>
            <person name="Daborn P.J."/>
            <person name="ffrench-Constant R.H."/>
        </authorList>
    </citation>
    <scope>NUCLEOTIDE SEQUENCE [GENOMIC DNA]</scope>
    <source>
        <strain>W14</strain>
    </source>
</reference>
<keyword id="KW-0997">Cell inner membrane</keyword>
<keyword id="KW-1003">Cell membrane</keyword>
<keyword id="KW-0472">Membrane</keyword>
<keyword id="KW-0571">Peptide transport</keyword>
<keyword id="KW-0653">Protein transport</keyword>
<keyword id="KW-0812">Transmembrane</keyword>
<keyword id="KW-1133">Transmembrane helix</keyword>
<keyword id="KW-0813">Transport</keyword>
<proteinExistence type="inferred from homology"/>
<organism>
    <name type="scientific">Photorhabdus luminescens</name>
    <name type="common">Xenorhabdus luminescens</name>
    <dbReference type="NCBI Taxonomy" id="29488"/>
    <lineage>
        <taxon>Bacteria</taxon>
        <taxon>Pseudomonadati</taxon>
        <taxon>Pseudomonadota</taxon>
        <taxon>Gammaproteobacteria</taxon>
        <taxon>Enterobacterales</taxon>
        <taxon>Morganellaceae</taxon>
        <taxon>Photorhabdus</taxon>
    </lineage>
</organism>
<protein>
    <recommendedName>
        <fullName evidence="1">Dipeptide and tripeptide permease B</fullName>
    </recommendedName>
</protein>
<name>DTPB_PHOLU</name>
<accession>Q8GFA2</accession>
<comment type="function">
    <text evidence="1">Proton-dependent permease that transports di- and tripeptides.</text>
</comment>
<comment type="subcellular location">
    <subcellularLocation>
        <location evidence="1">Cell inner membrane</location>
        <topology evidence="1">Multi-pass membrane protein</topology>
    </subcellularLocation>
</comment>
<comment type="similarity">
    <text evidence="1">Belongs to the major facilitator superfamily. Proton-dependent oligopeptide transporter (POT/PTR) (TC 2.A.17) family. DtpB subfamily.</text>
</comment>
<gene>
    <name evidence="1" type="primary">dtpB</name>
    <name type="ORF">orf33</name>
</gene>
<dbReference type="EMBL" id="AF346500">
    <property type="protein sequence ID" value="AAO17199.1"/>
    <property type="molecule type" value="Genomic_DNA"/>
</dbReference>
<dbReference type="SMR" id="Q8GFA2"/>
<dbReference type="OrthoDB" id="9772725at2"/>
<dbReference type="GO" id="GO:0005886">
    <property type="term" value="C:plasma membrane"/>
    <property type="evidence" value="ECO:0007669"/>
    <property type="project" value="UniProtKB-SubCell"/>
</dbReference>
<dbReference type="GO" id="GO:0071916">
    <property type="term" value="F:dipeptide transmembrane transporter activity"/>
    <property type="evidence" value="ECO:0007669"/>
    <property type="project" value="UniProtKB-UniRule"/>
</dbReference>
<dbReference type="GO" id="GO:0015333">
    <property type="term" value="F:peptide:proton symporter activity"/>
    <property type="evidence" value="ECO:0007669"/>
    <property type="project" value="UniProtKB-UniRule"/>
</dbReference>
<dbReference type="GO" id="GO:0042937">
    <property type="term" value="F:tripeptide transmembrane transporter activity"/>
    <property type="evidence" value="ECO:0007669"/>
    <property type="project" value="UniProtKB-UniRule"/>
</dbReference>
<dbReference type="GO" id="GO:0015031">
    <property type="term" value="P:protein transport"/>
    <property type="evidence" value="ECO:0007669"/>
    <property type="project" value="UniProtKB-KW"/>
</dbReference>
<dbReference type="CDD" id="cd17346">
    <property type="entry name" value="MFS_DtpA_like"/>
    <property type="match status" value="1"/>
</dbReference>
<dbReference type="FunFam" id="1.20.1250.20:FF:000017">
    <property type="entry name" value="Dipeptide and tripeptide permease A"/>
    <property type="match status" value="1"/>
</dbReference>
<dbReference type="Gene3D" id="1.20.1250.20">
    <property type="entry name" value="MFS general substrate transporter like domains"/>
    <property type="match status" value="1"/>
</dbReference>
<dbReference type="HAMAP" id="MF_01879">
    <property type="entry name" value="PTR2_DtpB_subfam"/>
    <property type="match status" value="1"/>
</dbReference>
<dbReference type="InterPro" id="IPR023778">
    <property type="entry name" value="AA/pep_transptr_DtpB"/>
</dbReference>
<dbReference type="InterPro" id="IPR005279">
    <property type="entry name" value="Dipep/tripep_permease"/>
</dbReference>
<dbReference type="InterPro" id="IPR036259">
    <property type="entry name" value="MFS_trans_sf"/>
</dbReference>
<dbReference type="InterPro" id="IPR050171">
    <property type="entry name" value="MFS_Transporters"/>
</dbReference>
<dbReference type="InterPro" id="IPR000109">
    <property type="entry name" value="POT_fam"/>
</dbReference>
<dbReference type="InterPro" id="IPR018456">
    <property type="entry name" value="PTR2_symporter_CS"/>
</dbReference>
<dbReference type="NCBIfam" id="NF007575">
    <property type="entry name" value="PRK10207.1"/>
    <property type="match status" value="1"/>
</dbReference>
<dbReference type="NCBIfam" id="TIGR00924">
    <property type="entry name" value="yjdL_sub1_fam"/>
    <property type="match status" value="1"/>
</dbReference>
<dbReference type="PANTHER" id="PTHR23517:SF15">
    <property type="entry name" value="PROTON-DEPENDENT OLIGOPEPTIDE FAMILY TRANSPORT PROTEIN"/>
    <property type="match status" value="1"/>
</dbReference>
<dbReference type="PANTHER" id="PTHR23517">
    <property type="entry name" value="RESISTANCE PROTEIN MDTM, PUTATIVE-RELATED-RELATED"/>
    <property type="match status" value="1"/>
</dbReference>
<dbReference type="Pfam" id="PF00854">
    <property type="entry name" value="PTR2"/>
    <property type="match status" value="1"/>
</dbReference>
<dbReference type="SUPFAM" id="SSF103473">
    <property type="entry name" value="MFS general substrate transporter"/>
    <property type="match status" value="1"/>
</dbReference>
<dbReference type="PROSITE" id="PS01022">
    <property type="entry name" value="PTR2_1"/>
    <property type="match status" value="1"/>
</dbReference>
<dbReference type="PROSITE" id="PS01023">
    <property type="entry name" value="PTR2_2"/>
    <property type="match status" value="1"/>
</dbReference>